<comment type="function">
    <text evidence="1">Removes the 2'-phosphate from RNA via an intermediate in which the phosphate is ADP-ribosylated by NAD followed by a presumed transesterification to release the RNA and generate ADP-ribose 1''-2''-cyclic phosphate (APPR&gt;P). May function as an ADP-ribosylase.</text>
</comment>
<comment type="similarity">
    <text evidence="1">Belongs to the KptA/TPT1 family.</text>
</comment>
<feature type="chain" id="PRO_1000115311" description="Probable RNA 2'-phosphotransferase">
    <location>
        <begin position="1"/>
        <end position="184"/>
    </location>
</feature>
<dbReference type="EC" id="2.7.1.-" evidence="1"/>
<dbReference type="EMBL" id="AP009240">
    <property type="protein sequence ID" value="BAG80130.1"/>
    <property type="molecule type" value="Genomic_DNA"/>
</dbReference>
<dbReference type="RefSeq" id="WP_001151854.1">
    <property type="nucleotide sequence ID" value="NC_011415.1"/>
</dbReference>
<dbReference type="SMR" id="B6I2L3"/>
<dbReference type="KEGG" id="ecy:ECSE_4606"/>
<dbReference type="HOGENOM" id="CLU_052998_4_0_6"/>
<dbReference type="Proteomes" id="UP000008199">
    <property type="component" value="Chromosome"/>
</dbReference>
<dbReference type="GO" id="GO:0003950">
    <property type="term" value="F:NAD+ poly-ADP-ribosyltransferase activity"/>
    <property type="evidence" value="ECO:0007669"/>
    <property type="project" value="InterPro"/>
</dbReference>
<dbReference type="GO" id="GO:0000215">
    <property type="term" value="F:tRNA 2'-phosphotransferase activity"/>
    <property type="evidence" value="ECO:0007669"/>
    <property type="project" value="TreeGrafter"/>
</dbReference>
<dbReference type="GO" id="GO:0006388">
    <property type="term" value="P:tRNA splicing, via endonucleolytic cleavage and ligation"/>
    <property type="evidence" value="ECO:0007669"/>
    <property type="project" value="UniProtKB-UniRule"/>
</dbReference>
<dbReference type="FunFam" id="1.10.10.970:FF:000001">
    <property type="entry name" value="RNA 2'-phosphotransferase"/>
    <property type="match status" value="1"/>
</dbReference>
<dbReference type="FunFam" id="3.20.170.30:FF:000001">
    <property type="entry name" value="RNA 2'-phosphotransferase"/>
    <property type="match status" value="1"/>
</dbReference>
<dbReference type="Gene3D" id="3.20.170.30">
    <property type="match status" value="1"/>
</dbReference>
<dbReference type="Gene3D" id="1.10.10.970">
    <property type="entry name" value="RNA 2'-phosphotransferase, Tpt1/KptA family, N-terminal domain"/>
    <property type="match status" value="1"/>
</dbReference>
<dbReference type="HAMAP" id="MF_00299">
    <property type="entry name" value="KptA"/>
    <property type="match status" value="1"/>
</dbReference>
<dbReference type="InterPro" id="IPR002745">
    <property type="entry name" value="Ptrans_KptA/Tpt1"/>
</dbReference>
<dbReference type="InterPro" id="IPR042081">
    <property type="entry name" value="RNA_2'-PTrans_C"/>
</dbReference>
<dbReference type="InterPro" id="IPR022928">
    <property type="entry name" value="RNA_2'-PTrans_KptA"/>
</dbReference>
<dbReference type="InterPro" id="IPR042080">
    <property type="entry name" value="RNA_2'-PTrans_N"/>
</dbReference>
<dbReference type="NCBIfam" id="NF002012">
    <property type="entry name" value="PRK00819.1-1"/>
    <property type="match status" value="1"/>
</dbReference>
<dbReference type="NCBIfam" id="NF002014">
    <property type="entry name" value="PRK00819.1-4"/>
    <property type="match status" value="1"/>
</dbReference>
<dbReference type="PANTHER" id="PTHR12684">
    <property type="entry name" value="PUTATIVE PHOSPHOTRANSFERASE"/>
    <property type="match status" value="1"/>
</dbReference>
<dbReference type="PANTHER" id="PTHR12684:SF2">
    <property type="entry name" value="TRNA 2'-PHOSPHOTRANSFERASE 1"/>
    <property type="match status" value="1"/>
</dbReference>
<dbReference type="Pfam" id="PF01885">
    <property type="entry name" value="PTS_2-RNA"/>
    <property type="match status" value="1"/>
</dbReference>
<dbReference type="SUPFAM" id="SSF56399">
    <property type="entry name" value="ADP-ribosylation"/>
    <property type="match status" value="1"/>
</dbReference>
<reference key="1">
    <citation type="journal article" date="2008" name="DNA Res.">
        <title>Complete genome sequence and comparative analysis of the wild-type commensal Escherichia coli strain SE11 isolated from a healthy adult.</title>
        <authorList>
            <person name="Oshima K."/>
            <person name="Toh H."/>
            <person name="Ogura Y."/>
            <person name="Sasamoto H."/>
            <person name="Morita H."/>
            <person name="Park S.-H."/>
            <person name="Ooka T."/>
            <person name="Iyoda S."/>
            <person name="Taylor T.D."/>
            <person name="Hayashi T."/>
            <person name="Itoh K."/>
            <person name="Hattori M."/>
        </authorList>
    </citation>
    <scope>NUCLEOTIDE SEQUENCE [LARGE SCALE GENOMIC DNA]</scope>
    <source>
        <strain>SE11</strain>
    </source>
</reference>
<keyword id="KW-0520">NAD</keyword>
<keyword id="KW-0808">Transferase</keyword>
<protein>
    <recommendedName>
        <fullName evidence="1">Probable RNA 2'-phosphotransferase</fullName>
        <ecNumber evidence="1">2.7.1.-</ecNumber>
    </recommendedName>
</protein>
<sequence length="184" mass="20530">MAKYNEKELADTSKFLSFVLRHKPEAIGIVLDREGWADIDKLILCAQKAGKRLTRALLDTVVATSDKKRFSYSSDGRCIRAVQGHSTSQVAISFAEKTPPQFLYHGTASRFLDEIKKQGLIAGERHYVHLSADEATARKVGARHGSPVILTVKAQEMAKRGIPFWQAENGVWLTSTVAVEFLEW</sequence>
<evidence type="ECO:0000255" key="1">
    <source>
        <dbReference type="HAMAP-Rule" id="MF_00299"/>
    </source>
</evidence>
<organism>
    <name type="scientific">Escherichia coli (strain SE11)</name>
    <dbReference type="NCBI Taxonomy" id="409438"/>
    <lineage>
        <taxon>Bacteria</taxon>
        <taxon>Pseudomonadati</taxon>
        <taxon>Pseudomonadota</taxon>
        <taxon>Gammaproteobacteria</taxon>
        <taxon>Enterobacterales</taxon>
        <taxon>Enterobacteriaceae</taxon>
        <taxon>Escherichia</taxon>
    </lineage>
</organism>
<proteinExistence type="inferred from homology"/>
<gene>
    <name evidence="1" type="primary">kptA</name>
    <name type="ordered locus">ECSE_4606</name>
</gene>
<accession>B6I2L3</accession>
<name>KPTA_ECOSE</name>